<organism>
    <name type="scientific">Xanthomonas campestris pv. campestris (strain 8004)</name>
    <dbReference type="NCBI Taxonomy" id="314565"/>
    <lineage>
        <taxon>Bacteria</taxon>
        <taxon>Pseudomonadati</taxon>
        <taxon>Pseudomonadota</taxon>
        <taxon>Gammaproteobacteria</taxon>
        <taxon>Lysobacterales</taxon>
        <taxon>Lysobacteraceae</taxon>
        <taxon>Xanthomonas</taxon>
    </lineage>
</organism>
<gene>
    <name evidence="1" type="primary">rimO</name>
    <name type="ordered locus">XC_1554</name>
</gene>
<dbReference type="EC" id="2.8.4.4" evidence="1"/>
<dbReference type="EMBL" id="CP000050">
    <property type="protein sequence ID" value="AAY48620.1"/>
    <property type="molecule type" value="Genomic_DNA"/>
</dbReference>
<dbReference type="RefSeq" id="WP_011037694.1">
    <property type="nucleotide sequence ID" value="NZ_CP155948.1"/>
</dbReference>
<dbReference type="SMR" id="Q4UWF3"/>
<dbReference type="GeneID" id="58012829"/>
<dbReference type="KEGG" id="xcb:XC_1554"/>
<dbReference type="HOGENOM" id="CLU_018697_0_0_6"/>
<dbReference type="Proteomes" id="UP000000420">
    <property type="component" value="Chromosome"/>
</dbReference>
<dbReference type="GO" id="GO:0005829">
    <property type="term" value="C:cytosol"/>
    <property type="evidence" value="ECO:0007669"/>
    <property type="project" value="TreeGrafter"/>
</dbReference>
<dbReference type="GO" id="GO:0051539">
    <property type="term" value="F:4 iron, 4 sulfur cluster binding"/>
    <property type="evidence" value="ECO:0007669"/>
    <property type="project" value="UniProtKB-UniRule"/>
</dbReference>
<dbReference type="GO" id="GO:0035599">
    <property type="term" value="F:aspartic acid methylthiotransferase activity"/>
    <property type="evidence" value="ECO:0007669"/>
    <property type="project" value="TreeGrafter"/>
</dbReference>
<dbReference type="GO" id="GO:0046872">
    <property type="term" value="F:metal ion binding"/>
    <property type="evidence" value="ECO:0007669"/>
    <property type="project" value="UniProtKB-KW"/>
</dbReference>
<dbReference type="GO" id="GO:0103039">
    <property type="term" value="F:protein methylthiotransferase activity"/>
    <property type="evidence" value="ECO:0007669"/>
    <property type="project" value="UniProtKB-EC"/>
</dbReference>
<dbReference type="GO" id="GO:0006400">
    <property type="term" value="P:tRNA modification"/>
    <property type="evidence" value="ECO:0007669"/>
    <property type="project" value="InterPro"/>
</dbReference>
<dbReference type="CDD" id="cd01335">
    <property type="entry name" value="Radical_SAM"/>
    <property type="match status" value="1"/>
</dbReference>
<dbReference type="FunFam" id="2.40.50.140:FF:000210">
    <property type="entry name" value="Ribosomal protein S12 methylthiotransferase RimO"/>
    <property type="match status" value="1"/>
</dbReference>
<dbReference type="FunFam" id="3.40.50.12160:FF:000002">
    <property type="entry name" value="Ribosomal protein S12 methylthiotransferase RimO"/>
    <property type="match status" value="1"/>
</dbReference>
<dbReference type="FunFam" id="3.80.30.20:FF:000001">
    <property type="entry name" value="tRNA-2-methylthio-N(6)-dimethylallyladenosine synthase 2"/>
    <property type="match status" value="1"/>
</dbReference>
<dbReference type="Gene3D" id="3.40.50.12160">
    <property type="entry name" value="Methylthiotransferase, N-terminal domain"/>
    <property type="match status" value="1"/>
</dbReference>
<dbReference type="Gene3D" id="2.40.50.140">
    <property type="entry name" value="Nucleic acid-binding proteins"/>
    <property type="match status" value="1"/>
</dbReference>
<dbReference type="Gene3D" id="3.80.30.20">
    <property type="entry name" value="tm_1862 like domain"/>
    <property type="match status" value="1"/>
</dbReference>
<dbReference type="HAMAP" id="MF_01865">
    <property type="entry name" value="MTTase_RimO"/>
    <property type="match status" value="1"/>
</dbReference>
<dbReference type="InterPro" id="IPR006638">
    <property type="entry name" value="Elp3/MiaA/NifB-like_rSAM"/>
</dbReference>
<dbReference type="InterPro" id="IPR005839">
    <property type="entry name" value="Methylthiotransferase"/>
</dbReference>
<dbReference type="InterPro" id="IPR020612">
    <property type="entry name" value="Methylthiotransferase_CS"/>
</dbReference>
<dbReference type="InterPro" id="IPR013848">
    <property type="entry name" value="Methylthiotransferase_N"/>
</dbReference>
<dbReference type="InterPro" id="IPR038135">
    <property type="entry name" value="Methylthiotransferase_N_sf"/>
</dbReference>
<dbReference type="InterPro" id="IPR012340">
    <property type="entry name" value="NA-bd_OB-fold"/>
</dbReference>
<dbReference type="InterPro" id="IPR005840">
    <property type="entry name" value="Ribosomal_uS12_MeSTrfase_RimO"/>
</dbReference>
<dbReference type="InterPro" id="IPR007197">
    <property type="entry name" value="rSAM"/>
</dbReference>
<dbReference type="InterPro" id="IPR023404">
    <property type="entry name" value="rSAM_horseshoe"/>
</dbReference>
<dbReference type="InterPro" id="IPR002792">
    <property type="entry name" value="TRAM_dom"/>
</dbReference>
<dbReference type="NCBIfam" id="TIGR01125">
    <property type="entry name" value="30S ribosomal protein S12 methylthiotransferase RimO"/>
    <property type="match status" value="1"/>
</dbReference>
<dbReference type="NCBIfam" id="TIGR00089">
    <property type="entry name" value="MiaB/RimO family radical SAM methylthiotransferase"/>
    <property type="match status" value="1"/>
</dbReference>
<dbReference type="PANTHER" id="PTHR43837">
    <property type="entry name" value="RIBOSOMAL PROTEIN S12 METHYLTHIOTRANSFERASE RIMO"/>
    <property type="match status" value="1"/>
</dbReference>
<dbReference type="PANTHER" id="PTHR43837:SF1">
    <property type="entry name" value="RIBOSOMAL PROTEIN US12 METHYLTHIOTRANSFERASE RIMO"/>
    <property type="match status" value="1"/>
</dbReference>
<dbReference type="Pfam" id="PF04055">
    <property type="entry name" value="Radical_SAM"/>
    <property type="match status" value="1"/>
</dbReference>
<dbReference type="Pfam" id="PF18693">
    <property type="entry name" value="TRAM_2"/>
    <property type="match status" value="1"/>
</dbReference>
<dbReference type="Pfam" id="PF00919">
    <property type="entry name" value="UPF0004"/>
    <property type="match status" value="1"/>
</dbReference>
<dbReference type="SFLD" id="SFLDG01082">
    <property type="entry name" value="B12-binding_domain_containing"/>
    <property type="match status" value="1"/>
</dbReference>
<dbReference type="SFLD" id="SFLDG01061">
    <property type="entry name" value="methylthiotransferase"/>
    <property type="match status" value="1"/>
</dbReference>
<dbReference type="SFLD" id="SFLDF00274">
    <property type="entry name" value="ribosomal_protein_S12_methylth"/>
    <property type="match status" value="1"/>
</dbReference>
<dbReference type="SMART" id="SM00729">
    <property type="entry name" value="Elp3"/>
    <property type="match status" value="1"/>
</dbReference>
<dbReference type="SUPFAM" id="SSF102114">
    <property type="entry name" value="Radical SAM enzymes"/>
    <property type="match status" value="1"/>
</dbReference>
<dbReference type="PROSITE" id="PS51449">
    <property type="entry name" value="MTTASE_N"/>
    <property type="match status" value="1"/>
</dbReference>
<dbReference type="PROSITE" id="PS01278">
    <property type="entry name" value="MTTASE_RADICAL"/>
    <property type="match status" value="1"/>
</dbReference>
<dbReference type="PROSITE" id="PS51918">
    <property type="entry name" value="RADICAL_SAM"/>
    <property type="match status" value="1"/>
</dbReference>
<dbReference type="PROSITE" id="PS50926">
    <property type="entry name" value="TRAM"/>
    <property type="match status" value="1"/>
</dbReference>
<protein>
    <recommendedName>
        <fullName evidence="1">Ribosomal protein uS12 methylthiotransferase RimO</fullName>
        <shortName evidence="1">uS12 MTTase</shortName>
        <shortName evidence="1">uS12 methylthiotransferase</shortName>
        <ecNumber evidence="1">2.8.4.4</ecNumber>
    </recommendedName>
    <alternativeName>
        <fullName evidence="1">Ribosomal protein uS12 (aspartate-C(3))-methylthiotransferase</fullName>
    </alternativeName>
    <alternativeName>
        <fullName evidence="1">Ribosome maturation factor RimO</fullName>
    </alternativeName>
</protein>
<evidence type="ECO:0000255" key="1">
    <source>
        <dbReference type="HAMAP-Rule" id="MF_01865"/>
    </source>
</evidence>
<evidence type="ECO:0000255" key="2">
    <source>
        <dbReference type="PROSITE-ProRule" id="PRU01266"/>
    </source>
</evidence>
<feature type="chain" id="PRO_0000375071" description="Ribosomal protein uS12 methylthiotransferase RimO">
    <location>
        <begin position="1"/>
        <end position="457"/>
    </location>
</feature>
<feature type="domain" description="MTTase N-terminal" evidence="1">
    <location>
        <begin position="6"/>
        <end position="116"/>
    </location>
</feature>
<feature type="domain" description="Radical SAM core" evidence="2">
    <location>
        <begin position="133"/>
        <end position="370"/>
    </location>
</feature>
<feature type="domain" description="TRAM" evidence="1">
    <location>
        <begin position="373"/>
        <end position="441"/>
    </location>
</feature>
<feature type="binding site" evidence="1">
    <location>
        <position position="15"/>
    </location>
    <ligand>
        <name>[4Fe-4S] cluster</name>
        <dbReference type="ChEBI" id="CHEBI:49883"/>
        <label>1</label>
    </ligand>
</feature>
<feature type="binding site" evidence="1">
    <location>
        <position position="51"/>
    </location>
    <ligand>
        <name>[4Fe-4S] cluster</name>
        <dbReference type="ChEBI" id="CHEBI:49883"/>
        <label>1</label>
    </ligand>
</feature>
<feature type="binding site" evidence="1">
    <location>
        <position position="80"/>
    </location>
    <ligand>
        <name>[4Fe-4S] cluster</name>
        <dbReference type="ChEBI" id="CHEBI:49883"/>
        <label>1</label>
    </ligand>
</feature>
<feature type="binding site" evidence="1">
    <location>
        <position position="147"/>
    </location>
    <ligand>
        <name>[4Fe-4S] cluster</name>
        <dbReference type="ChEBI" id="CHEBI:49883"/>
        <label>2</label>
        <note>4Fe-4S-S-AdoMet</note>
    </ligand>
</feature>
<feature type="binding site" evidence="1">
    <location>
        <position position="151"/>
    </location>
    <ligand>
        <name>[4Fe-4S] cluster</name>
        <dbReference type="ChEBI" id="CHEBI:49883"/>
        <label>2</label>
        <note>4Fe-4S-S-AdoMet</note>
    </ligand>
</feature>
<feature type="binding site" evidence="1">
    <location>
        <position position="154"/>
    </location>
    <ligand>
        <name>[4Fe-4S] cluster</name>
        <dbReference type="ChEBI" id="CHEBI:49883"/>
        <label>2</label>
        <note>4Fe-4S-S-AdoMet</note>
    </ligand>
</feature>
<accession>Q4UWF3</accession>
<proteinExistence type="inferred from homology"/>
<keyword id="KW-0004">4Fe-4S</keyword>
<keyword id="KW-0963">Cytoplasm</keyword>
<keyword id="KW-0408">Iron</keyword>
<keyword id="KW-0411">Iron-sulfur</keyword>
<keyword id="KW-0479">Metal-binding</keyword>
<keyword id="KW-0949">S-adenosyl-L-methionine</keyword>
<keyword id="KW-0808">Transferase</keyword>
<sequence length="457" mass="50503">MSQLNPKVGFVSLGCPKALVDSERILTQLRVEGYDIVPSYDAADVVVVNTCGFIDSAVTESLDAIGEAMNANGKVIVTGCLGKRPEQIREAYPQVLAVSGPQDYQSVMEAVHAALPPRHDPFVDLVPDYGIKLTPRHYAYLKISEGCNHRCSFCIIPSMRGDLASRPVDEVLREAERLVRGGVKELLVVSQDTSAYGVDLKYAERPWRDRMYQTRMKALCEGLSELGVWTRLHYVYPYPHVDDVIPLMAEGKLLPYLDIPFQHASPRILKLMKRPGAVEKTLERVQRWKAMCPEITVRSTFIVGFPGETDAEFEALLEFLDQAQLDRVGAFAYSPVEGASANALPDPVPEELKQERLARFMARQAEISAARLEAKIGSVQQCLVDLIEDDIAVARSRADAPEIDGLVHIQNGGELKLKVGDLVDVEITDSDEHDLFGDALPSDPAAQPPRALNLQMV</sequence>
<comment type="function">
    <text evidence="1">Catalyzes the methylthiolation of an aspartic acid residue of ribosomal protein uS12.</text>
</comment>
<comment type="catalytic activity">
    <reaction evidence="1">
        <text>L-aspartate(89)-[ribosomal protein uS12]-hydrogen + (sulfur carrier)-SH + AH2 + 2 S-adenosyl-L-methionine = 3-methylsulfanyl-L-aspartate(89)-[ribosomal protein uS12]-hydrogen + (sulfur carrier)-H + 5'-deoxyadenosine + L-methionine + A + S-adenosyl-L-homocysteine + 2 H(+)</text>
        <dbReference type="Rhea" id="RHEA:37087"/>
        <dbReference type="Rhea" id="RHEA-COMP:10460"/>
        <dbReference type="Rhea" id="RHEA-COMP:10461"/>
        <dbReference type="Rhea" id="RHEA-COMP:14737"/>
        <dbReference type="Rhea" id="RHEA-COMP:14739"/>
        <dbReference type="ChEBI" id="CHEBI:13193"/>
        <dbReference type="ChEBI" id="CHEBI:15378"/>
        <dbReference type="ChEBI" id="CHEBI:17319"/>
        <dbReference type="ChEBI" id="CHEBI:17499"/>
        <dbReference type="ChEBI" id="CHEBI:29917"/>
        <dbReference type="ChEBI" id="CHEBI:29961"/>
        <dbReference type="ChEBI" id="CHEBI:57844"/>
        <dbReference type="ChEBI" id="CHEBI:57856"/>
        <dbReference type="ChEBI" id="CHEBI:59789"/>
        <dbReference type="ChEBI" id="CHEBI:64428"/>
        <dbReference type="ChEBI" id="CHEBI:73599"/>
        <dbReference type="EC" id="2.8.4.4"/>
    </reaction>
</comment>
<comment type="cofactor">
    <cofactor evidence="1">
        <name>[4Fe-4S] cluster</name>
        <dbReference type="ChEBI" id="CHEBI:49883"/>
    </cofactor>
    <text evidence="1">Binds 2 [4Fe-4S] clusters. One cluster is coordinated with 3 cysteines and an exchangeable S-adenosyl-L-methionine.</text>
</comment>
<comment type="subcellular location">
    <subcellularLocation>
        <location evidence="1">Cytoplasm</location>
    </subcellularLocation>
</comment>
<comment type="similarity">
    <text evidence="1">Belongs to the methylthiotransferase family. RimO subfamily.</text>
</comment>
<name>RIMO_XANC8</name>
<reference key="1">
    <citation type="journal article" date="2005" name="Genome Res.">
        <title>Comparative and functional genomic analyses of the pathogenicity of phytopathogen Xanthomonas campestris pv. campestris.</title>
        <authorList>
            <person name="Qian W."/>
            <person name="Jia Y."/>
            <person name="Ren S.-X."/>
            <person name="He Y.-Q."/>
            <person name="Feng J.-X."/>
            <person name="Lu L.-F."/>
            <person name="Sun Q."/>
            <person name="Ying G."/>
            <person name="Tang D.-J."/>
            <person name="Tang H."/>
            <person name="Wu W."/>
            <person name="Hao P."/>
            <person name="Wang L."/>
            <person name="Jiang B.-L."/>
            <person name="Zeng S."/>
            <person name="Gu W.-Y."/>
            <person name="Lu G."/>
            <person name="Rong L."/>
            <person name="Tian Y."/>
            <person name="Yao Z."/>
            <person name="Fu G."/>
            <person name="Chen B."/>
            <person name="Fang R."/>
            <person name="Qiang B."/>
            <person name="Chen Z."/>
            <person name="Zhao G.-P."/>
            <person name="Tang J.-L."/>
            <person name="He C."/>
        </authorList>
    </citation>
    <scope>NUCLEOTIDE SEQUENCE [LARGE SCALE GENOMIC DNA]</scope>
    <source>
        <strain>8004</strain>
    </source>
</reference>